<keyword id="KW-0997">Cell inner membrane</keyword>
<keyword id="KW-1003">Cell membrane</keyword>
<keyword id="KW-0406">Ion transport</keyword>
<keyword id="KW-0408">Iron</keyword>
<keyword id="KW-0472">Membrane</keyword>
<keyword id="KW-0479">Metal-binding</keyword>
<keyword id="KW-1185">Reference proteome</keyword>
<keyword id="KW-0812">Transmembrane</keyword>
<keyword id="KW-1133">Transmembrane helix</keyword>
<keyword id="KW-0813">Transport</keyword>
<keyword id="KW-0862">Zinc</keyword>
<keyword id="KW-0864">Zinc transport</keyword>
<comment type="function">
    <text evidence="1">Mediates zinc uptake. May also transport other divalent cations.</text>
</comment>
<comment type="catalytic activity">
    <reaction evidence="1">
        <text>Zn(2+)(in) = Zn(2+)(out)</text>
        <dbReference type="Rhea" id="RHEA:29351"/>
        <dbReference type="ChEBI" id="CHEBI:29105"/>
    </reaction>
</comment>
<comment type="subcellular location">
    <subcellularLocation>
        <location evidence="1">Cell inner membrane</location>
        <topology evidence="1">Multi-pass membrane protein</topology>
    </subcellularLocation>
</comment>
<comment type="similarity">
    <text evidence="1">Belongs to the ZIP transporter (TC 2.A.5) family. ZupT subfamily.</text>
</comment>
<accession>Q3YXK1</accession>
<name>ZUPT_SHISS</name>
<proteinExistence type="inferred from homology"/>
<evidence type="ECO:0000255" key="1">
    <source>
        <dbReference type="HAMAP-Rule" id="MF_00548"/>
    </source>
</evidence>
<reference key="1">
    <citation type="journal article" date="2005" name="Nucleic Acids Res.">
        <title>Genome dynamics and diversity of Shigella species, the etiologic agents of bacillary dysentery.</title>
        <authorList>
            <person name="Yang F."/>
            <person name="Yang J."/>
            <person name="Zhang X."/>
            <person name="Chen L."/>
            <person name="Jiang Y."/>
            <person name="Yan Y."/>
            <person name="Tang X."/>
            <person name="Wang J."/>
            <person name="Xiong Z."/>
            <person name="Dong J."/>
            <person name="Xue Y."/>
            <person name="Zhu Y."/>
            <person name="Xu X."/>
            <person name="Sun L."/>
            <person name="Chen S."/>
            <person name="Nie H."/>
            <person name="Peng J."/>
            <person name="Xu J."/>
            <person name="Wang Y."/>
            <person name="Yuan Z."/>
            <person name="Wen Y."/>
            <person name="Yao Z."/>
            <person name="Shen Y."/>
            <person name="Qiang B."/>
            <person name="Hou Y."/>
            <person name="Yu J."/>
            <person name="Jin Q."/>
        </authorList>
    </citation>
    <scope>NUCLEOTIDE SEQUENCE [LARGE SCALE GENOMIC DNA]</scope>
    <source>
        <strain>Ss046</strain>
    </source>
</reference>
<protein>
    <recommendedName>
        <fullName evidence="1">Zinc transporter ZupT</fullName>
    </recommendedName>
</protein>
<gene>
    <name evidence="1" type="primary">zupT</name>
    <name type="ordered locus">SSON_3177</name>
</gene>
<dbReference type="EMBL" id="CP000038">
    <property type="protein sequence ID" value="AAZ89761.1"/>
    <property type="molecule type" value="Genomic_DNA"/>
</dbReference>
<dbReference type="RefSeq" id="WP_001295627.1">
    <property type="nucleotide sequence ID" value="NC_007384.1"/>
</dbReference>
<dbReference type="SMR" id="Q3YXK1"/>
<dbReference type="GeneID" id="93778954"/>
<dbReference type="KEGG" id="ssn:SSON_3177"/>
<dbReference type="HOGENOM" id="CLU_015114_1_3_6"/>
<dbReference type="Proteomes" id="UP000002529">
    <property type="component" value="Chromosome"/>
</dbReference>
<dbReference type="GO" id="GO:0005886">
    <property type="term" value="C:plasma membrane"/>
    <property type="evidence" value="ECO:0007669"/>
    <property type="project" value="UniProtKB-SubCell"/>
</dbReference>
<dbReference type="GO" id="GO:0046872">
    <property type="term" value="F:metal ion binding"/>
    <property type="evidence" value="ECO:0007669"/>
    <property type="project" value="UniProtKB-KW"/>
</dbReference>
<dbReference type="GO" id="GO:0005385">
    <property type="term" value="F:zinc ion transmembrane transporter activity"/>
    <property type="evidence" value="ECO:0007669"/>
    <property type="project" value="UniProtKB-UniRule"/>
</dbReference>
<dbReference type="HAMAP" id="MF_00548">
    <property type="entry name" value="ZupT"/>
    <property type="match status" value="1"/>
</dbReference>
<dbReference type="InterPro" id="IPR003689">
    <property type="entry name" value="ZIP"/>
</dbReference>
<dbReference type="InterPro" id="IPR023498">
    <property type="entry name" value="Zn_transptr_ZupT"/>
</dbReference>
<dbReference type="NCBIfam" id="NF003243">
    <property type="entry name" value="PRK04201.1"/>
    <property type="match status" value="1"/>
</dbReference>
<dbReference type="PANTHER" id="PTHR11040:SF205">
    <property type="entry name" value="ZINC TRANSPORTER ZUPT"/>
    <property type="match status" value="1"/>
</dbReference>
<dbReference type="PANTHER" id="PTHR11040">
    <property type="entry name" value="ZINC/IRON TRANSPORTER"/>
    <property type="match status" value="1"/>
</dbReference>
<dbReference type="Pfam" id="PF02535">
    <property type="entry name" value="Zip"/>
    <property type="match status" value="2"/>
</dbReference>
<feature type="chain" id="PRO_1000017780" description="Zinc transporter ZupT">
    <location>
        <begin position="1"/>
        <end position="257"/>
    </location>
</feature>
<feature type="transmembrane region" description="Helical" evidence="1">
    <location>
        <begin position="5"/>
        <end position="25"/>
    </location>
</feature>
<feature type="transmembrane region" description="Helical" evidence="1">
    <location>
        <begin position="32"/>
        <end position="52"/>
    </location>
</feature>
<feature type="transmembrane region" description="Helical" evidence="1">
    <location>
        <begin position="61"/>
        <end position="81"/>
    </location>
</feature>
<feature type="transmembrane region" description="Helical" evidence="1">
    <location>
        <begin position="137"/>
        <end position="157"/>
    </location>
</feature>
<feature type="transmembrane region" description="Helical" evidence="1">
    <location>
        <begin position="171"/>
        <end position="191"/>
    </location>
</feature>
<feature type="transmembrane region" description="Helical" evidence="1">
    <location>
        <begin position="195"/>
        <end position="215"/>
    </location>
</feature>
<feature type="transmembrane region" description="Helical" evidence="1">
    <location>
        <begin position="236"/>
        <end position="256"/>
    </location>
</feature>
<feature type="binding site" description="M2 metal binding site" evidence="1">
    <location>
        <position position="120"/>
    </location>
    <ligand>
        <name>Fe(2+)</name>
        <dbReference type="ChEBI" id="CHEBI:29033"/>
    </ligand>
</feature>
<feature type="binding site" description="M2 metal binding site" evidence="1">
    <location>
        <position position="123"/>
    </location>
    <ligand>
        <name>Fe(2+)</name>
        <dbReference type="ChEBI" id="CHEBI:29033"/>
    </ligand>
</feature>
<feature type="binding site" description="M1 metal binding site" evidence="1">
    <location>
        <position position="123"/>
    </location>
    <ligand>
        <name>Zn(2+)</name>
        <dbReference type="ChEBI" id="CHEBI:29105"/>
    </ligand>
</feature>
<feature type="binding site" description="M1 metal binding site" evidence="1">
    <location>
        <position position="148"/>
    </location>
    <ligand>
        <name>Zn(2+)</name>
        <dbReference type="ChEBI" id="CHEBI:29105"/>
    </ligand>
</feature>
<feature type="binding site" description="M2 metal binding site" evidence="1">
    <location>
        <position position="149"/>
    </location>
    <ligand>
        <name>Fe(2+)</name>
        <dbReference type="ChEBI" id="CHEBI:29033"/>
    </ligand>
</feature>
<feature type="binding site" description="M2 metal binding site" evidence="1">
    <location>
        <position position="152"/>
    </location>
    <ligand>
        <name>Fe(2+)</name>
        <dbReference type="ChEBI" id="CHEBI:29033"/>
    </ligand>
</feature>
<feature type="binding site" description="M1 metal binding site" evidence="1">
    <location>
        <position position="152"/>
    </location>
    <ligand>
        <name>Zn(2+)</name>
        <dbReference type="ChEBI" id="CHEBI:29105"/>
    </ligand>
</feature>
<feature type="binding site" description="M2 metal binding site" evidence="1">
    <location>
        <position position="181"/>
    </location>
    <ligand>
        <name>Fe(2+)</name>
        <dbReference type="ChEBI" id="CHEBI:29033"/>
    </ligand>
</feature>
<sequence length="257" mass="26485">MSVPLILTILAGAATFIGAFLGVLGQKPSNRLLAFSLGFAAGIMLLISLMEMLPAALAAEGMSPVLGYGMFIFGLLGYFGLDRMLPHAHPQDLMQKSVQPLPKSIKRTAILLTLGISLHNFPEGIATFVTASSNLELGFGIALAVALHNIPEGLAVAGPVYAATGSKRTAILWAGISGLAEILGGVLAWLILGSMISPVVMAAIMAAVAGIMVALSVDELMPLAKEIDPNNNPSYGVLCGMSVMGFSLVLLQTAGIG</sequence>
<organism>
    <name type="scientific">Shigella sonnei (strain Ss046)</name>
    <dbReference type="NCBI Taxonomy" id="300269"/>
    <lineage>
        <taxon>Bacteria</taxon>
        <taxon>Pseudomonadati</taxon>
        <taxon>Pseudomonadota</taxon>
        <taxon>Gammaproteobacteria</taxon>
        <taxon>Enterobacterales</taxon>
        <taxon>Enterobacteriaceae</taxon>
        <taxon>Shigella</taxon>
    </lineage>
</organism>